<comment type="function">
    <text evidence="1">Essential for normal spermatogenesis.</text>
</comment>
<comment type="tissue specificity">
    <text evidence="2 3">Testis-specific.</text>
</comment>
<comment type="induction">
    <text evidence="3">Down-regulated expression in testicular samples of azoospermic men.</text>
</comment>
<feature type="chain" id="PRO_0000331495" description="Protein SPMIP7">
    <location>
        <begin position="1"/>
        <end position="438"/>
    </location>
</feature>
<feature type="sequence conflict" description="In Ref. 2; EAL23902." evidence="4" ref="2">
    <original>T</original>
    <variation>A</variation>
    <location>
        <position position="268"/>
    </location>
</feature>
<feature type="sequence conflict" description="In Ref. 2; EAL23902." evidence="4" ref="2">
    <original>T</original>
    <variation>I</variation>
    <location>
        <position position="358"/>
    </location>
</feature>
<keyword id="KW-0221">Differentiation</keyword>
<keyword id="KW-1267">Proteomics identification</keyword>
<keyword id="KW-1185">Reference proteome</keyword>
<keyword id="KW-0744">Spermatogenesis</keyword>
<accession>A4D263</accession>
<accession>A6NDX9</accession>
<organism>
    <name type="scientific">Homo sapiens</name>
    <name type="common">Human</name>
    <dbReference type="NCBI Taxonomy" id="9606"/>
    <lineage>
        <taxon>Eukaryota</taxon>
        <taxon>Metazoa</taxon>
        <taxon>Chordata</taxon>
        <taxon>Craniata</taxon>
        <taxon>Vertebrata</taxon>
        <taxon>Euteleostomi</taxon>
        <taxon>Mammalia</taxon>
        <taxon>Eutheria</taxon>
        <taxon>Euarchontoglires</taxon>
        <taxon>Primates</taxon>
        <taxon>Haplorrhini</taxon>
        <taxon>Catarrhini</taxon>
        <taxon>Hominidae</taxon>
        <taxon>Homo</taxon>
    </lineage>
</organism>
<protein>
    <recommendedName>
        <fullName evidence="4">Protein SPMIP7</fullName>
    </recommendedName>
    <alternativeName>
        <fullName evidence="5">Sperm microtubule inner protein 7</fullName>
    </alternativeName>
    <alternativeName>
        <fullName evidence="5">Spermatogenesis-associated protein 48</fullName>
    </alternativeName>
</protein>
<sequence length="438" mass="49672">MDVEIQDTPGKISISKRSILSGTVENIDYPHYCDLLRKMNMPFVKGLENRHNYGRFEKKCNPAFLKFHPYPPSVLPDYHLHDPYPPPYGPHYPLFPLRDDVTLGDSCSGFMSPGGDADLNPGIGRTIPTLVDFSDVKPQHRVPRPDTGFQTTIKRQKILSEELQQNRRWNSREVPDISIRARLGGWTSPLKVTPLQPHHEGRSLSHIFTFDEEATCTDEGEPLVQTNKKCNAKDSFYKSSTQKAYEDVPWDKMLPPKLVPEETTLEKTADPISQCFTLKRYKGVPAITQMVGELWDRFQTRSFLAPVKPINFVSSSSRSKYIPLYTGHVQSTNADDVDNPLGDIASLAKQRYSKPLYTNTSRAANIPGYTGKVHFTATHPANSNIPSTTPSPDSELHRVFQKEMAVDLFRHQAPLSRLVTTVRPYNPFNKKDKETIDY</sequence>
<name>SMIP7_HUMAN</name>
<reference key="1">
    <citation type="journal article" date="2003" name="Nature">
        <title>The DNA sequence of human chromosome 7.</title>
        <authorList>
            <person name="Hillier L.W."/>
            <person name="Fulton R.S."/>
            <person name="Fulton L.A."/>
            <person name="Graves T.A."/>
            <person name="Pepin K.H."/>
            <person name="Wagner-McPherson C."/>
            <person name="Layman D."/>
            <person name="Maas J."/>
            <person name="Jaeger S."/>
            <person name="Walker R."/>
            <person name="Wylie K."/>
            <person name="Sekhon M."/>
            <person name="Becker M.C."/>
            <person name="O'Laughlin M.D."/>
            <person name="Schaller M.E."/>
            <person name="Fewell G.A."/>
            <person name="Delehaunty K.D."/>
            <person name="Miner T.L."/>
            <person name="Nash W.E."/>
            <person name="Cordes M."/>
            <person name="Du H."/>
            <person name="Sun H."/>
            <person name="Edwards J."/>
            <person name="Bradshaw-Cordum H."/>
            <person name="Ali J."/>
            <person name="Andrews S."/>
            <person name="Isak A."/>
            <person name="Vanbrunt A."/>
            <person name="Nguyen C."/>
            <person name="Du F."/>
            <person name="Lamar B."/>
            <person name="Courtney L."/>
            <person name="Kalicki J."/>
            <person name="Ozersky P."/>
            <person name="Bielicki L."/>
            <person name="Scott K."/>
            <person name="Holmes A."/>
            <person name="Harkins R."/>
            <person name="Harris A."/>
            <person name="Strong C.M."/>
            <person name="Hou S."/>
            <person name="Tomlinson C."/>
            <person name="Dauphin-Kohlberg S."/>
            <person name="Kozlowicz-Reilly A."/>
            <person name="Leonard S."/>
            <person name="Rohlfing T."/>
            <person name="Rock S.M."/>
            <person name="Tin-Wollam A.-M."/>
            <person name="Abbott A."/>
            <person name="Minx P."/>
            <person name="Maupin R."/>
            <person name="Strowmatt C."/>
            <person name="Latreille P."/>
            <person name="Miller N."/>
            <person name="Johnson D."/>
            <person name="Murray J."/>
            <person name="Woessner J.P."/>
            <person name="Wendl M.C."/>
            <person name="Yang S.-P."/>
            <person name="Schultz B.R."/>
            <person name="Wallis J.W."/>
            <person name="Spieth J."/>
            <person name="Bieri T.A."/>
            <person name="Nelson J.O."/>
            <person name="Berkowicz N."/>
            <person name="Wohldmann P.E."/>
            <person name="Cook L.L."/>
            <person name="Hickenbotham M.T."/>
            <person name="Eldred J."/>
            <person name="Williams D."/>
            <person name="Bedell J.A."/>
            <person name="Mardis E.R."/>
            <person name="Clifton S.W."/>
            <person name="Chissoe S.L."/>
            <person name="Marra M.A."/>
            <person name="Raymond C."/>
            <person name="Haugen E."/>
            <person name="Gillett W."/>
            <person name="Zhou Y."/>
            <person name="James R."/>
            <person name="Phelps K."/>
            <person name="Iadanoto S."/>
            <person name="Bubb K."/>
            <person name="Simms E."/>
            <person name="Levy R."/>
            <person name="Clendenning J."/>
            <person name="Kaul R."/>
            <person name="Kent W.J."/>
            <person name="Furey T.S."/>
            <person name="Baertsch R.A."/>
            <person name="Brent M.R."/>
            <person name="Keibler E."/>
            <person name="Flicek P."/>
            <person name="Bork P."/>
            <person name="Suyama M."/>
            <person name="Bailey J.A."/>
            <person name="Portnoy M.E."/>
            <person name="Torrents D."/>
            <person name="Chinwalla A.T."/>
            <person name="Gish W.R."/>
            <person name="Eddy S.R."/>
            <person name="McPherson J.D."/>
            <person name="Olson M.V."/>
            <person name="Eichler E.E."/>
            <person name="Green E.D."/>
            <person name="Waterston R.H."/>
            <person name="Wilson R.K."/>
        </authorList>
    </citation>
    <scope>NUCLEOTIDE SEQUENCE [LARGE SCALE GENOMIC DNA]</scope>
</reference>
<reference key="2">
    <citation type="journal article" date="2003" name="Science">
        <title>Human chromosome 7: DNA sequence and biology.</title>
        <authorList>
            <person name="Scherer S.W."/>
            <person name="Cheung J."/>
            <person name="MacDonald J.R."/>
            <person name="Osborne L.R."/>
            <person name="Nakabayashi K."/>
            <person name="Herbrick J.-A."/>
            <person name="Carson A.R."/>
            <person name="Parker-Katiraee L."/>
            <person name="Skaug J."/>
            <person name="Khaja R."/>
            <person name="Zhang J."/>
            <person name="Hudek A.K."/>
            <person name="Li M."/>
            <person name="Haddad M."/>
            <person name="Duggan G.E."/>
            <person name="Fernandez B.A."/>
            <person name="Kanematsu E."/>
            <person name="Gentles S."/>
            <person name="Christopoulos C.C."/>
            <person name="Choufani S."/>
            <person name="Kwasnicka D."/>
            <person name="Zheng X.H."/>
            <person name="Lai Z."/>
            <person name="Nusskern D.R."/>
            <person name="Zhang Q."/>
            <person name="Gu Z."/>
            <person name="Lu F."/>
            <person name="Zeesman S."/>
            <person name="Nowaczyk M.J."/>
            <person name="Teshima I."/>
            <person name="Chitayat D."/>
            <person name="Shuman C."/>
            <person name="Weksberg R."/>
            <person name="Zackai E.H."/>
            <person name="Grebe T.A."/>
            <person name="Cox S.R."/>
            <person name="Kirkpatrick S.J."/>
            <person name="Rahman N."/>
            <person name="Friedman J.M."/>
            <person name="Heng H.H.Q."/>
            <person name="Pelicci P.G."/>
            <person name="Lo-Coco F."/>
            <person name="Belloni E."/>
            <person name="Shaffer L.G."/>
            <person name="Pober B."/>
            <person name="Morton C.C."/>
            <person name="Gusella J.F."/>
            <person name="Bruns G.A.P."/>
            <person name="Korf B.R."/>
            <person name="Quade B.J."/>
            <person name="Ligon A.H."/>
            <person name="Ferguson H."/>
            <person name="Higgins A.W."/>
            <person name="Leach N.T."/>
            <person name="Herrick S.R."/>
            <person name="Lemyre E."/>
            <person name="Farra C.G."/>
            <person name="Kim H.-G."/>
            <person name="Summers A.M."/>
            <person name="Gripp K.W."/>
            <person name="Roberts W."/>
            <person name="Szatmari P."/>
            <person name="Winsor E.J.T."/>
            <person name="Grzeschik K.-H."/>
            <person name="Teebi A."/>
            <person name="Minassian B.A."/>
            <person name="Kere J."/>
            <person name="Armengol L."/>
            <person name="Pujana M.A."/>
            <person name="Estivill X."/>
            <person name="Wilson M.D."/>
            <person name="Koop B.F."/>
            <person name="Tosi S."/>
            <person name="Moore G.E."/>
            <person name="Boright A.P."/>
            <person name="Zlotorynski E."/>
            <person name="Kerem B."/>
            <person name="Kroisel P.M."/>
            <person name="Petek E."/>
            <person name="Oscier D.G."/>
            <person name="Mould S.J."/>
            <person name="Doehner H."/>
            <person name="Doehner K."/>
            <person name="Rommens J.M."/>
            <person name="Vincent J.B."/>
            <person name="Venter J.C."/>
            <person name="Li P.W."/>
            <person name="Mural R.J."/>
            <person name="Adams M.D."/>
            <person name="Tsui L.-C."/>
        </authorList>
    </citation>
    <scope>NUCLEOTIDE SEQUENCE [LARGE SCALE GENOMIC DNA]</scope>
</reference>
<reference key="3">
    <citation type="journal article" date="2018" name="Andrologia">
        <title>Spermatogenesis-associated 48 is essential for spermatogenesis in mice.</title>
        <authorList>
            <person name="Zhang J."/>
            <person name="Yan R."/>
            <person name="Wu C."/>
            <person name="Wang H."/>
            <person name="Yang G."/>
            <person name="Zhong Y."/>
            <person name="Liu Y."/>
            <person name="Wan L."/>
            <person name="Tang A."/>
        </authorList>
    </citation>
    <scope>TISSUE SPECIFICITY</scope>
</reference>
<reference key="4">
    <citation type="journal article" date="2023" name="Andrology">
        <title>The human sperm proteome-Toward a panel for male fertility testing.</title>
        <authorList>
            <person name="Greither T."/>
            <person name="Dejung M."/>
            <person name="Behre H.M."/>
            <person name="Butter F."/>
            <person name="Herlyn H."/>
        </authorList>
    </citation>
    <scope>IDENTIFICATION BY MASS SPECTROMETRY</scope>
    <scope>TISSUE SPECIFICITY</scope>
    <scope>INDUCTION</scope>
</reference>
<dbReference type="EMBL" id="AC020743">
    <property type="status" value="NOT_ANNOTATED_CDS"/>
    <property type="molecule type" value="Genomic_DNA"/>
</dbReference>
<dbReference type="EMBL" id="AC034148">
    <property type="status" value="NOT_ANNOTATED_CDS"/>
    <property type="molecule type" value="Genomic_DNA"/>
</dbReference>
<dbReference type="EMBL" id="CH236955">
    <property type="protein sequence ID" value="EAL23902.1"/>
    <property type="molecule type" value="Genomic_DNA"/>
</dbReference>
<dbReference type="CCDS" id="CCDS47585.1"/>
<dbReference type="RefSeq" id="NP_001155306.3">
    <property type="nucleotide sequence ID" value="NM_001161834.3"/>
</dbReference>
<dbReference type="IntAct" id="A4D263">
    <property type="interactions" value="3"/>
</dbReference>
<dbReference type="STRING" id="9606.ENSP00000297001"/>
<dbReference type="iPTMnet" id="A4D263"/>
<dbReference type="PhosphoSitePlus" id="A4D263"/>
<dbReference type="BioMuta" id="SPATA48"/>
<dbReference type="MassIVE" id="A4D263"/>
<dbReference type="PaxDb" id="9606-ENSP00000297001"/>
<dbReference type="PeptideAtlas" id="A4D263"/>
<dbReference type="ProteomicsDB" id="640"/>
<dbReference type="Antibodypedia" id="7345">
    <property type="antibodies" value="56 antibodies from 10 providers"/>
</dbReference>
<dbReference type="Ensembl" id="ENST00000297001.7">
    <property type="protein sequence ID" value="ENSP00000297001.7"/>
    <property type="gene ID" value="ENSG00000164500.7"/>
</dbReference>
<dbReference type="GeneID" id="100130988"/>
<dbReference type="MANE-Select" id="ENST00000297001.7">
    <property type="protein sequence ID" value="ENSP00000297001.7"/>
    <property type="RefSeq nucleotide sequence ID" value="NM_001161834.3"/>
    <property type="RefSeq protein sequence ID" value="NP_001155306.3"/>
</dbReference>
<dbReference type="UCSC" id="uc011kcj.3">
    <property type="organism name" value="human"/>
</dbReference>
<dbReference type="AGR" id="HGNC:22564"/>
<dbReference type="GeneCards" id="SPMIP7"/>
<dbReference type="HGNC" id="HGNC:22564">
    <property type="gene designation" value="SPMIP7"/>
</dbReference>
<dbReference type="HPA" id="ENSG00000164500">
    <property type="expression patterns" value="Tissue enriched (testis)"/>
</dbReference>
<dbReference type="neXtProt" id="NX_A4D263"/>
<dbReference type="OpenTargets" id="ENSG00000164500"/>
<dbReference type="PharmGKB" id="PA165617678"/>
<dbReference type="VEuPathDB" id="HostDB:ENSG00000164500"/>
<dbReference type="eggNOG" id="ENOG502RYZE">
    <property type="taxonomic scope" value="Eukaryota"/>
</dbReference>
<dbReference type="GeneTree" id="ENSGT00940000162844"/>
<dbReference type="HOGENOM" id="CLU_705862_0_0_1"/>
<dbReference type="InParanoid" id="A4D263"/>
<dbReference type="OMA" id="NRRWNSR"/>
<dbReference type="PAN-GO" id="A4D263">
    <property type="GO annotations" value="0 GO annotations based on evolutionary models"/>
</dbReference>
<dbReference type="PhylomeDB" id="A4D263"/>
<dbReference type="TreeFam" id="TF337635"/>
<dbReference type="PathwayCommons" id="A4D263"/>
<dbReference type="SignaLink" id="A4D263"/>
<dbReference type="ChiTaRS" id="C7orf72">
    <property type="organism name" value="human"/>
</dbReference>
<dbReference type="Pharos" id="A4D263">
    <property type="development level" value="Tdark"/>
</dbReference>
<dbReference type="PRO" id="PR:A4D263"/>
<dbReference type="Proteomes" id="UP000005640">
    <property type="component" value="Chromosome 7"/>
</dbReference>
<dbReference type="RNAct" id="A4D263">
    <property type="molecule type" value="protein"/>
</dbReference>
<dbReference type="Bgee" id="ENSG00000164500">
    <property type="expression patterns" value="Expressed in left testis and 13 other cell types or tissues"/>
</dbReference>
<dbReference type="GO" id="GO:0030154">
    <property type="term" value="P:cell differentiation"/>
    <property type="evidence" value="ECO:0007669"/>
    <property type="project" value="UniProtKB-KW"/>
</dbReference>
<dbReference type="GO" id="GO:0007283">
    <property type="term" value="P:spermatogenesis"/>
    <property type="evidence" value="ECO:0000250"/>
    <property type="project" value="UniProtKB"/>
</dbReference>
<dbReference type="InterPro" id="IPR027867">
    <property type="entry name" value="SPATA48"/>
</dbReference>
<dbReference type="PANTHER" id="PTHR34759">
    <property type="entry name" value="SPERMATOGENESIS-ASSOCIATED PROTEIN 48"/>
    <property type="match status" value="1"/>
</dbReference>
<dbReference type="PANTHER" id="PTHR34759:SF1">
    <property type="entry name" value="SPERMATOGENESIS-ASSOCIATED PROTEIN 48"/>
    <property type="match status" value="1"/>
</dbReference>
<dbReference type="Pfam" id="PF15073">
    <property type="entry name" value="SPATA48"/>
    <property type="match status" value="1"/>
</dbReference>
<evidence type="ECO:0000250" key="1">
    <source>
        <dbReference type="UniProtKB" id="Q5NC83"/>
    </source>
</evidence>
<evidence type="ECO:0000269" key="2">
    <source>
    </source>
</evidence>
<evidence type="ECO:0000269" key="3">
    <source>
    </source>
</evidence>
<evidence type="ECO:0000305" key="4"/>
<evidence type="ECO:0000312" key="5">
    <source>
        <dbReference type="HGNC" id="HGNC:22564"/>
    </source>
</evidence>
<proteinExistence type="evidence at protein level"/>
<gene>
    <name evidence="5" type="primary">SPMIP7</name>
    <name type="synonym">C7orf72</name>
    <name type="synonym">SPATA48</name>
</gene>